<dbReference type="EC" id="3.4.21.-"/>
<dbReference type="EMBL" id="AE015929">
    <property type="protein sequence ID" value="AAO04319.1"/>
    <property type="status" value="ALT_FRAME"/>
    <property type="molecule type" value="Genomic_DNA"/>
</dbReference>
<dbReference type="EMBL" id="AE015929">
    <property type="protein sequence ID" value="AAO04320.1"/>
    <property type="status" value="ALT_FRAME"/>
    <property type="molecule type" value="Genomic_DNA"/>
</dbReference>
<dbReference type="RefSeq" id="NP_764277.1">
    <property type="nucleotide sequence ID" value="NC_004461.1"/>
</dbReference>
<dbReference type="RefSeq" id="NP_764278.1">
    <property type="nucleotide sequence ID" value="NC_004461.1"/>
</dbReference>
<dbReference type="RefSeq" id="WP_001829335.1">
    <property type="nucleotide sequence ID" value="NZ_WBME01000019.1"/>
</dbReference>
<dbReference type="SMR" id="Q8CT52"/>
<dbReference type="KEGG" id="sep:SE_0722"/>
<dbReference type="KEGG" id="sep:SE_0723"/>
<dbReference type="PATRIC" id="fig|176280.10.peg.696"/>
<dbReference type="eggNOG" id="COG0265">
    <property type="taxonomic scope" value="Bacteria"/>
</dbReference>
<dbReference type="HOGENOM" id="CLU_833963_0_0_9"/>
<dbReference type="OrthoDB" id="9758917at2"/>
<dbReference type="Proteomes" id="UP000001411">
    <property type="component" value="Chromosome"/>
</dbReference>
<dbReference type="GO" id="GO:0005886">
    <property type="term" value="C:plasma membrane"/>
    <property type="evidence" value="ECO:0007669"/>
    <property type="project" value="UniProtKB-SubCell"/>
</dbReference>
<dbReference type="GO" id="GO:0004252">
    <property type="term" value="F:serine-type endopeptidase activity"/>
    <property type="evidence" value="ECO:0007669"/>
    <property type="project" value="InterPro"/>
</dbReference>
<dbReference type="GO" id="GO:0006508">
    <property type="term" value="P:proteolysis"/>
    <property type="evidence" value="ECO:0007669"/>
    <property type="project" value="UniProtKB-KW"/>
</dbReference>
<dbReference type="CDD" id="cd06781">
    <property type="entry name" value="cpPDZ_BsHtra-like"/>
    <property type="match status" value="1"/>
</dbReference>
<dbReference type="Gene3D" id="2.30.42.10">
    <property type="match status" value="1"/>
</dbReference>
<dbReference type="Gene3D" id="2.40.10.10">
    <property type="entry name" value="Trypsin-like serine proteases"/>
    <property type="match status" value="2"/>
</dbReference>
<dbReference type="InterPro" id="IPR051201">
    <property type="entry name" value="Chloro_Bact_Ser_Proteases"/>
</dbReference>
<dbReference type="InterPro" id="IPR001478">
    <property type="entry name" value="PDZ"/>
</dbReference>
<dbReference type="InterPro" id="IPR036034">
    <property type="entry name" value="PDZ_sf"/>
</dbReference>
<dbReference type="InterPro" id="IPR009003">
    <property type="entry name" value="Peptidase_S1_PA"/>
</dbReference>
<dbReference type="InterPro" id="IPR043504">
    <property type="entry name" value="Peptidase_S1_PA_chymotrypsin"/>
</dbReference>
<dbReference type="InterPro" id="IPR001940">
    <property type="entry name" value="Peptidase_S1C"/>
</dbReference>
<dbReference type="PANTHER" id="PTHR43343">
    <property type="entry name" value="PEPTIDASE S12"/>
    <property type="match status" value="1"/>
</dbReference>
<dbReference type="PANTHER" id="PTHR43343:SF3">
    <property type="entry name" value="PROTEASE DO-LIKE 8, CHLOROPLASTIC"/>
    <property type="match status" value="1"/>
</dbReference>
<dbReference type="Pfam" id="PF13180">
    <property type="entry name" value="PDZ_2"/>
    <property type="match status" value="1"/>
</dbReference>
<dbReference type="Pfam" id="PF13365">
    <property type="entry name" value="Trypsin_2"/>
    <property type="match status" value="1"/>
</dbReference>
<dbReference type="PRINTS" id="PR00834">
    <property type="entry name" value="PROTEASES2C"/>
</dbReference>
<dbReference type="SMART" id="SM00228">
    <property type="entry name" value="PDZ"/>
    <property type="match status" value="1"/>
</dbReference>
<dbReference type="SUPFAM" id="SSF50156">
    <property type="entry name" value="PDZ domain-like"/>
    <property type="match status" value="1"/>
</dbReference>
<dbReference type="SUPFAM" id="SSF50494">
    <property type="entry name" value="Trypsin-like serine proteases"/>
    <property type="match status" value="1"/>
</dbReference>
<dbReference type="PROSITE" id="PS50106">
    <property type="entry name" value="PDZ"/>
    <property type="match status" value="1"/>
</dbReference>
<reference key="1">
    <citation type="journal article" date="2003" name="Mol. Microbiol.">
        <title>Genome-based analysis of virulence genes in a non-biofilm-forming Staphylococcus epidermidis strain (ATCC 12228).</title>
        <authorList>
            <person name="Zhang Y.-Q."/>
            <person name="Ren S.-X."/>
            <person name="Li H.-L."/>
            <person name="Wang Y.-X."/>
            <person name="Fu G."/>
            <person name="Yang J."/>
            <person name="Qin Z.-Q."/>
            <person name="Miao Y.-G."/>
            <person name="Wang W.-Y."/>
            <person name="Chen R.-S."/>
            <person name="Shen Y."/>
            <person name="Chen Z."/>
            <person name="Yuan Z.-H."/>
            <person name="Zhao G.-P."/>
            <person name="Qu D."/>
            <person name="Danchin A."/>
            <person name="Wen Y.-M."/>
        </authorList>
    </citation>
    <scope>NUCLEOTIDE SEQUENCE [LARGE SCALE GENOMIC DNA]</scope>
    <source>
        <strain>ATCC 12228 / FDA PCI 1200</strain>
    </source>
</reference>
<keyword id="KW-1003">Cell membrane</keyword>
<keyword id="KW-0378">Hydrolase</keyword>
<keyword id="KW-0472">Membrane</keyword>
<keyword id="KW-0645">Protease</keyword>
<keyword id="KW-0720">Serine protease</keyword>
<keyword id="KW-0812">Transmembrane</keyword>
<keyword id="KW-1133">Transmembrane helix</keyword>
<name>HTRAL_STAES</name>
<comment type="subcellular location">
    <subcellularLocation>
        <location evidence="4">Cell membrane</location>
        <topology evidence="4">Single-pass membrane protein</topology>
    </subcellularLocation>
</comment>
<comment type="similarity">
    <text evidence="4">Belongs to the peptidase S1C family.</text>
</comment>
<comment type="sequence caution" evidence="4">
    <conflict type="frameshift">
        <sequence resource="EMBL-CDS" id="AAO04320"/>
    </conflict>
</comment>
<evidence type="ECO:0000255" key="1"/>
<evidence type="ECO:0000255" key="2">
    <source>
        <dbReference type="PROSITE-ProRule" id="PRU00143"/>
    </source>
</evidence>
<evidence type="ECO:0000256" key="3">
    <source>
        <dbReference type="SAM" id="MobiDB-lite"/>
    </source>
</evidence>
<evidence type="ECO:0000305" key="4"/>
<organism>
    <name type="scientific">Staphylococcus epidermidis (strain ATCC 12228 / FDA PCI 1200)</name>
    <dbReference type="NCBI Taxonomy" id="176280"/>
    <lineage>
        <taxon>Bacteria</taxon>
        <taxon>Bacillati</taxon>
        <taxon>Bacillota</taxon>
        <taxon>Bacilli</taxon>
        <taxon>Bacillales</taxon>
        <taxon>Staphylococcaceae</taxon>
        <taxon>Staphylococcus</taxon>
    </lineage>
</organism>
<protein>
    <recommendedName>
        <fullName>Serine protease HtrA-like</fullName>
        <ecNumber>3.4.21.-</ecNumber>
    </recommendedName>
</protein>
<accession>Q8CT52</accession>
<accession>Q8CT51</accession>
<gene>
    <name type="ordered locus">SE_0722/SE_0723</name>
</gene>
<proteinExistence type="inferred from homology"/>
<sequence>MDNNKKQVIPRSQYRRKRREYFHNVEREERIRREKIEKENQAKREQHQTKVNEERVKDNLRKARIEKLTQEEIHQQRDDKSYKQKTLNQNNQMNKSKDDDNKIGEESLHDVRVSSDTSTLPHQNKSIKDYDDSGNESKQHTKLTSKESMLGVNSNHTEQDSRSTQPYSSKHSYSQPKDKDNDNTQQAQFLKKEDKQRNRAENIKKVNEFKQLVVAFFKEHWPKMLIIIGIIVLLLILNAIFTTVNKNDHTNDSAFNGTAKDETTAMKIAENSVKSVVTVENDLSNDTTVSDNKNESDNEIGSGVVYKKVGDSIYIFTNAHVVGDQEKQKVTYGNDKSVTGKVIGKDKWSDLAVVKAKVADENIKPMTMGDSNNIKLAEPILVIGNPLGTDFKGSVSQGIVSGLNRHVPVDIDKNDNYDALMKAFQIDAPVNPGNSGGAVVDRDGRLIGIVSLKIDMHNVEGMAFAIPINDVRKIAKELEHKGKVNYPNTEIKIKNVGDLDDSERNAINLPAKVNHGVLIGEVKENGLGDKAGLKKGDVIVELDGKKIEDNLRYRQVIYSHYDDQKTITAKIYRNGAEKNIKIKLK</sequence>
<feature type="chain" id="PRO_0000252472" description="Serine protease HtrA-like">
    <location>
        <begin position="1"/>
        <end position="585"/>
    </location>
</feature>
<feature type="transmembrane region" description="Helical" evidence="1">
    <location>
        <begin position="224"/>
        <end position="244"/>
    </location>
</feature>
<feature type="domain" description="PDZ" evidence="2">
    <location>
        <begin position="516"/>
        <end position="575"/>
    </location>
</feature>
<feature type="region of interest" description="Disordered" evidence="3">
    <location>
        <begin position="1"/>
        <end position="184"/>
    </location>
</feature>
<feature type="compositionally biased region" description="Basic and acidic residues" evidence="3">
    <location>
        <begin position="21"/>
        <end position="82"/>
    </location>
</feature>
<feature type="compositionally biased region" description="Polar residues" evidence="3">
    <location>
        <begin position="84"/>
        <end position="94"/>
    </location>
</feature>
<feature type="compositionally biased region" description="Basic and acidic residues" evidence="3">
    <location>
        <begin position="95"/>
        <end position="113"/>
    </location>
</feature>
<feature type="compositionally biased region" description="Polar residues" evidence="3">
    <location>
        <begin position="114"/>
        <end position="124"/>
    </location>
</feature>
<feature type="compositionally biased region" description="Basic and acidic residues" evidence="3">
    <location>
        <begin position="126"/>
        <end position="139"/>
    </location>
</feature>
<feature type="compositionally biased region" description="Polar residues" evidence="3">
    <location>
        <begin position="151"/>
        <end position="175"/>
    </location>
</feature>
<feature type="active site" description="Charge relay system" evidence="1">
    <location>
        <position position="320"/>
    </location>
</feature>
<feature type="active site" description="Charge relay system" evidence="1">
    <location>
        <position position="350"/>
    </location>
</feature>
<feature type="active site" description="Charge relay system" evidence="1">
    <location>
        <position position="435"/>
    </location>
</feature>